<feature type="chain" id="PRO_1000067459" description="C4-dicarboxylate transport protein">
    <location>
        <begin position="1"/>
        <end position="431"/>
    </location>
</feature>
<feature type="transmembrane region" description="Helical" evidence="1">
    <location>
        <begin position="8"/>
        <end position="28"/>
    </location>
</feature>
<feature type="transmembrane region" description="Helical" evidence="1">
    <location>
        <begin position="44"/>
        <end position="64"/>
    </location>
</feature>
<feature type="transmembrane region" description="Helical" evidence="1">
    <location>
        <begin position="78"/>
        <end position="98"/>
    </location>
</feature>
<feature type="transmembrane region" description="Helical" evidence="1">
    <location>
        <begin position="148"/>
        <end position="168"/>
    </location>
</feature>
<feature type="transmembrane region" description="Helical" evidence="1">
    <location>
        <begin position="188"/>
        <end position="208"/>
    </location>
</feature>
<feature type="transmembrane region" description="Helical" evidence="1">
    <location>
        <begin position="222"/>
        <end position="242"/>
    </location>
</feature>
<feature type="transmembrane region" description="Helical" evidence="1">
    <location>
        <begin position="307"/>
        <end position="327"/>
    </location>
</feature>
<feature type="transmembrane region" description="Helical" evidence="1">
    <location>
        <begin position="355"/>
        <end position="375"/>
    </location>
</feature>
<sequence>MRKPFYKILYVQVLFAIFVGILLGHFWPDTGVAMKPLGDGFIKLIKMIIGPIIFCTVVTGIAGMSDMKKVGRVGGKALLYFEIVSTFALLIGLGAAHLLKPGVGFNIDPATLDTKAIEQYVSKAHGQSTVEFLMHIIPDTIFSAFSNGDILQILLVSLFFGAALAAIGERARIVVQLIEQVSKVFFHIVHVITKVAPIGAFGAMAFTIGKYGLGSLVPLLKLIGTFYFTAIVFVVFVLGAIARATGFNILRFISYIKEELLIVLGTSSSEAALPHLMEKLEKLGCSKSVVGLVVPTGYSFNLDGTNIYMTMAVIFIAQATGIELTLLQQLTILGVAMLTSKGASGVTGAGFITLAATLAVVPTIPVAGMVLILGIDRFMSECRALTNIIGNGVATVVVSAWEHELDRAQLKRTLQQGGEDEAELADAGQNV</sequence>
<organism>
    <name type="scientific">Cupriavidus pinatubonensis (strain JMP 134 / LMG 1197)</name>
    <name type="common">Cupriavidus necator (strain JMP 134)</name>
    <dbReference type="NCBI Taxonomy" id="264198"/>
    <lineage>
        <taxon>Bacteria</taxon>
        <taxon>Pseudomonadati</taxon>
        <taxon>Pseudomonadota</taxon>
        <taxon>Betaproteobacteria</taxon>
        <taxon>Burkholderiales</taxon>
        <taxon>Burkholderiaceae</taxon>
        <taxon>Cupriavidus</taxon>
    </lineage>
</organism>
<name>DCTA_CUPPJ</name>
<keyword id="KW-0997">Cell inner membrane</keyword>
<keyword id="KW-1003">Cell membrane</keyword>
<keyword id="KW-0472">Membrane</keyword>
<keyword id="KW-0769">Symport</keyword>
<keyword id="KW-0812">Transmembrane</keyword>
<keyword id="KW-1133">Transmembrane helix</keyword>
<keyword id="KW-0813">Transport</keyword>
<reference key="1">
    <citation type="journal article" date="2010" name="PLoS ONE">
        <title>The complete multipartite genome sequence of Cupriavidus necator JMP134, a versatile pollutant degrader.</title>
        <authorList>
            <person name="Lykidis A."/>
            <person name="Perez-Pantoja D."/>
            <person name="Ledger T."/>
            <person name="Mavromatis K."/>
            <person name="Anderson I.J."/>
            <person name="Ivanova N.N."/>
            <person name="Hooper S.D."/>
            <person name="Lapidus A."/>
            <person name="Lucas S."/>
            <person name="Gonzalez B."/>
            <person name="Kyrpides N.C."/>
        </authorList>
    </citation>
    <scope>NUCLEOTIDE SEQUENCE [LARGE SCALE GENOMIC DNA]</scope>
    <source>
        <strain>JMP134 / LMG 1197</strain>
    </source>
</reference>
<evidence type="ECO:0000255" key="1">
    <source>
        <dbReference type="HAMAP-Rule" id="MF_01300"/>
    </source>
</evidence>
<protein>
    <recommendedName>
        <fullName evidence="1">C4-dicarboxylate transport protein</fullName>
    </recommendedName>
</protein>
<proteinExistence type="inferred from homology"/>
<dbReference type="EMBL" id="CP000090">
    <property type="protein sequence ID" value="AAZ59659.1"/>
    <property type="molecule type" value="Genomic_DNA"/>
</dbReference>
<dbReference type="SMR" id="Q476M4"/>
<dbReference type="STRING" id="264198.Reut_A0277"/>
<dbReference type="KEGG" id="reu:Reut_A0277"/>
<dbReference type="eggNOG" id="COG1301">
    <property type="taxonomic scope" value="Bacteria"/>
</dbReference>
<dbReference type="HOGENOM" id="CLU_019375_7_0_4"/>
<dbReference type="OrthoDB" id="9766690at2"/>
<dbReference type="GO" id="GO:0005886">
    <property type="term" value="C:plasma membrane"/>
    <property type="evidence" value="ECO:0007669"/>
    <property type="project" value="UniProtKB-SubCell"/>
</dbReference>
<dbReference type="GO" id="GO:0015138">
    <property type="term" value="F:fumarate transmembrane transporter activity"/>
    <property type="evidence" value="ECO:0007669"/>
    <property type="project" value="TreeGrafter"/>
</dbReference>
<dbReference type="GO" id="GO:0015366">
    <property type="term" value="F:malate:proton symporter activity"/>
    <property type="evidence" value="ECO:0007669"/>
    <property type="project" value="TreeGrafter"/>
</dbReference>
<dbReference type="GO" id="GO:0015141">
    <property type="term" value="F:succinate transmembrane transporter activity"/>
    <property type="evidence" value="ECO:0007669"/>
    <property type="project" value="TreeGrafter"/>
</dbReference>
<dbReference type="GO" id="GO:0070778">
    <property type="term" value="P:L-aspartate transmembrane transport"/>
    <property type="evidence" value="ECO:0007669"/>
    <property type="project" value="TreeGrafter"/>
</dbReference>
<dbReference type="FunFam" id="1.10.3860.10:FF:000001">
    <property type="entry name" value="C4-dicarboxylate transport protein"/>
    <property type="match status" value="1"/>
</dbReference>
<dbReference type="Gene3D" id="1.10.3860.10">
    <property type="entry name" value="Sodium:dicarboxylate symporter"/>
    <property type="match status" value="1"/>
</dbReference>
<dbReference type="HAMAP" id="MF_01300">
    <property type="entry name" value="C4_dicarb_transport"/>
    <property type="match status" value="1"/>
</dbReference>
<dbReference type="InterPro" id="IPR023954">
    <property type="entry name" value="C4_dicarb_transport"/>
</dbReference>
<dbReference type="InterPro" id="IPR001991">
    <property type="entry name" value="Na-dicarboxylate_symporter"/>
</dbReference>
<dbReference type="InterPro" id="IPR018107">
    <property type="entry name" value="Na-dicarboxylate_symporter_CS"/>
</dbReference>
<dbReference type="InterPro" id="IPR036458">
    <property type="entry name" value="Na:dicarbo_symporter_sf"/>
</dbReference>
<dbReference type="NCBIfam" id="NF002461">
    <property type="entry name" value="PRK01663.1"/>
    <property type="match status" value="1"/>
</dbReference>
<dbReference type="NCBIfam" id="NF009587">
    <property type="entry name" value="PRK13027.1"/>
    <property type="match status" value="1"/>
</dbReference>
<dbReference type="PANTHER" id="PTHR42865:SF1">
    <property type="entry name" value="AEROBIC C4-DICARBOXYLATE TRANSPORT PROTEIN"/>
    <property type="match status" value="1"/>
</dbReference>
<dbReference type="PANTHER" id="PTHR42865">
    <property type="entry name" value="PROTON/GLUTAMATE-ASPARTATE SYMPORTER"/>
    <property type="match status" value="1"/>
</dbReference>
<dbReference type="Pfam" id="PF00375">
    <property type="entry name" value="SDF"/>
    <property type="match status" value="1"/>
</dbReference>
<dbReference type="PRINTS" id="PR00173">
    <property type="entry name" value="EDTRNSPORT"/>
</dbReference>
<dbReference type="SUPFAM" id="SSF118215">
    <property type="entry name" value="Proton glutamate symport protein"/>
    <property type="match status" value="1"/>
</dbReference>
<dbReference type="PROSITE" id="PS00713">
    <property type="entry name" value="NA_DICARBOXYL_SYMP_1"/>
    <property type="match status" value="1"/>
</dbReference>
<dbReference type="PROSITE" id="PS00714">
    <property type="entry name" value="NA_DICARBOXYL_SYMP_2"/>
    <property type="match status" value="1"/>
</dbReference>
<comment type="function">
    <text evidence="1">Responsible for the transport of dicarboxylates such as succinate, fumarate, and malate from the periplasm across the membrane.</text>
</comment>
<comment type="subcellular location">
    <subcellularLocation>
        <location evidence="1">Cell inner membrane</location>
        <topology evidence="1">Multi-pass membrane protein</topology>
    </subcellularLocation>
</comment>
<comment type="similarity">
    <text evidence="1">Belongs to the dicarboxylate/amino acid:cation symporter (DAACS) (TC 2.A.23) family.</text>
</comment>
<accession>Q476M4</accession>
<gene>
    <name evidence="1" type="primary">dctA</name>
    <name type="ordered locus">Reut_A0277</name>
</gene>